<organism>
    <name type="scientific">Proteus sp. (strain LE138)</name>
    <dbReference type="NCBI Taxonomy" id="217617"/>
    <lineage>
        <taxon>Bacteria</taxon>
        <taxon>Pseudomonadati</taxon>
        <taxon>Pseudomonadota</taxon>
        <taxon>Gammaproteobacteria</taxon>
        <taxon>Enterobacterales</taxon>
        <taxon>Morganellaceae</taxon>
        <taxon>Proteus</taxon>
    </lineage>
</organism>
<comment type="function">
    <text evidence="1">Catalyzes the exchange of L-carnitine for gamma-butyrobetaine.</text>
</comment>
<comment type="catalytic activity">
    <reaction evidence="1">
        <text>4-(trimethylamino)butanoate(in) + (R)-carnitine(out) = 4-(trimethylamino)butanoate(out) + (R)-carnitine(in)</text>
        <dbReference type="Rhea" id="RHEA:29427"/>
        <dbReference type="ChEBI" id="CHEBI:16244"/>
        <dbReference type="ChEBI" id="CHEBI:16347"/>
    </reaction>
</comment>
<comment type="pathway">
    <text evidence="1">Amine and polyamine metabolism; carnitine metabolism.</text>
</comment>
<comment type="subunit">
    <text evidence="1">Homotrimer.</text>
</comment>
<comment type="subcellular location">
    <subcellularLocation>
        <location evidence="1">Cell inner membrane</location>
        <topology evidence="1">Multi-pass membrane protein</topology>
    </subcellularLocation>
</comment>
<comment type="similarity">
    <text evidence="1">Belongs to the BCCT transporter (TC 2.A.15) family. CaiT subfamily.</text>
</comment>
<proteinExistence type="inferred from homology"/>
<protein>
    <recommendedName>
        <fullName evidence="1">L-carnitine/gamma-butyrobetaine antiporter</fullName>
    </recommendedName>
</protein>
<sequence>MSKDNKKAGIEPKVFFPPLIIVGILCWLTVRDLDASNEVINAVFSYVTNVWGWAFEWYMVIMFGGWFWLVFGRYAKKRLGDEKPEFSTASWIFMMFASCTSAAVLFWGSIEIYYYISSPPFGMEGYSAPAKEIGLAYSLFHWGPLPWATYSFLSVAFAYFFFVRKMEVIRPSSTLTPLVGEKHVNGLFGTVVDNFYLVALILAMGTSLGLATPLVTECIQYLFGIPHTLQLDAIIISCWILLNAICVAFGLQKGVKIASDVRTYLSFLMLGWVFIVGGASFIVNYFTDSVGTLLMYMPRMLFYTDPIGKGGFPQAWTVFYWAWWVIYAIQMSIFLARISKGRTVRELCLGMVSGLTAGTWLIWTYSGGNTLQLIDQNILNIPQLIDQYGVPRAIIETWAALPLSTATMWGFFILCFIATVTLINACSYTLAMSTCRSMKEGAEPPLLVRIGWSVLVGIIGIILLALGGLKPIQTAIIAGGCPLFFVNIMVTLSFIKDAKVHWKD</sequence>
<gene>
    <name evidence="1" type="primary">caiT</name>
</gene>
<name>CAIT_PROSL</name>
<dbReference type="EMBL" id="AJ508908">
    <property type="protein sequence ID" value="CAD48578.1"/>
    <property type="molecule type" value="Genomic_DNA"/>
</dbReference>
<dbReference type="SMR" id="P59334"/>
<dbReference type="UniPathway" id="UPA00117"/>
<dbReference type="GO" id="GO:0005886">
    <property type="term" value="C:plasma membrane"/>
    <property type="evidence" value="ECO:0007669"/>
    <property type="project" value="UniProtKB-SubCell"/>
</dbReference>
<dbReference type="GO" id="GO:0044667">
    <property type="term" value="F:(R)-carnitine:4-(trimethylammonio)butanoate antiporter activity"/>
    <property type="evidence" value="ECO:0007669"/>
    <property type="project" value="UniProtKB-UniRule"/>
</dbReference>
<dbReference type="GO" id="GO:1900751">
    <property type="term" value="P:4-(trimethylammonio)butanoate transport"/>
    <property type="evidence" value="ECO:0007669"/>
    <property type="project" value="InterPro"/>
</dbReference>
<dbReference type="GO" id="GO:0009437">
    <property type="term" value="P:carnitine metabolic process"/>
    <property type="evidence" value="ECO:0007669"/>
    <property type="project" value="UniProtKB-UniRule"/>
</dbReference>
<dbReference type="HAMAP" id="MF_01049">
    <property type="entry name" value="CaiT"/>
    <property type="match status" value="1"/>
</dbReference>
<dbReference type="InterPro" id="IPR018093">
    <property type="entry name" value="BCCT_CS"/>
</dbReference>
<dbReference type="InterPro" id="IPR000060">
    <property type="entry name" value="BCCT_transptr"/>
</dbReference>
<dbReference type="InterPro" id="IPR023449">
    <property type="entry name" value="BCCT_transptr_CaiT"/>
</dbReference>
<dbReference type="NCBIfam" id="TIGR00842">
    <property type="entry name" value="bcct"/>
    <property type="match status" value="1"/>
</dbReference>
<dbReference type="NCBIfam" id="NF002887">
    <property type="entry name" value="PRK03356.1"/>
    <property type="match status" value="1"/>
</dbReference>
<dbReference type="PANTHER" id="PTHR30047">
    <property type="entry name" value="HIGH-AFFINITY CHOLINE TRANSPORT PROTEIN-RELATED"/>
    <property type="match status" value="1"/>
</dbReference>
<dbReference type="PANTHER" id="PTHR30047:SF11">
    <property type="entry name" value="L-CARNITINE_GAMMA-BUTYROBETAINE ANTIPORTER"/>
    <property type="match status" value="1"/>
</dbReference>
<dbReference type="Pfam" id="PF02028">
    <property type="entry name" value="BCCT"/>
    <property type="match status" value="1"/>
</dbReference>
<dbReference type="PROSITE" id="PS01303">
    <property type="entry name" value="BCCT"/>
    <property type="match status" value="1"/>
</dbReference>
<evidence type="ECO:0000255" key="1">
    <source>
        <dbReference type="HAMAP-Rule" id="MF_01049"/>
    </source>
</evidence>
<accession>P59334</accession>
<reference key="1">
    <citation type="submission" date="2002-09" db="EMBL/GenBank/DDBJ databases">
        <title>Cai locus and corresponding enzymes of Proteus sp.</title>
        <authorList>
            <person name="Engemann C."/>
            <person name="Elssner T."/>
            <person name="Pfeifer S."/>
            <person name="Krumbholz C."/>
            <person name="Maier T."/>
            <person name="Kleber H.-P."/>
        </authorList>
    </citation>
    <scope>NUCLEOTIDE SEQUENCE [GENOMIC DNA]</scope>
</reference>
<keyword id="KW-0050">Antiport</keyword>
<keyword id="KW-0997">Cell inner membrane</keyword>
<keyword id="KW-1003">Cell membrane</keyword>
<keyword id="KW-0472">Membrane</keyword>
<keyword id="KW-0812">Transmembrane</keyword>
<keyword id="KW-1133">Transmembrane helix</keyword>
<keyword id="KW-0813">Transport</keyword>
<feature type="chain" id="PRO_0000201489" description="L-carnitine/gamma-butyrobetaine antiporter">
    <location>
        <begin position="1"/>
        <end position="504"/>
    </location>
</feature>
<feature type="transmembrane region" description="Helical" evidence="1">
    <location>
        <begin position="8"/>
        <end position="28"/>
    </location>
</feature>
<feature type="transmembrane region" description="Helical" evidence="1">
    <location>
        <begin position="51"/>
        <end position="71"/>
    </location>
</feature>
<feature type="transmembrane region" description="Helical" evidence="1">
    <location>
        <begin position="92"/>
        <end position="112"/>
    </location>
</feature>
<feature type="transmembrane region" description="Helical" evidence="1">
    <location>
        <begin position="143"/>
        <end position="163"/>
    </location>
</feature>
<feature type="transmembrane region" description="Helical" evidence="1">
    <location>
        <begin position="195"/>
        <end position="215"/>
    </location>
</feature>
<feature type="transmembrane region" description="Helical" evidence="1">
    <location>
        <begin position="231"/>
        <end position="251"/>
    </location>
</feature>
<feature type="transmembrane region" description="Helical" evidence="1">
    <location>
        <begin position="263"/>
        <end position="283"/>
    </location>
</feature>
<feature type="transmembrane region" description="Helical" evidence="1">
    <location>
        <begin position="315"/>
        <end position="335"/>
    </location>
</feature>
<feature type="transmembrane region" description="Helical" evidence="1">
    <location>
        <begin position="347"/>
        <end position="367"/>
    </location>
</feature>
<feature type="transmembrane region" description="Helical" evidence="1">
    <location>
        <begin position="403"/>
        <end position="423"/>
    </location>
</feature>
<feature type="transmembrane region" description="Helical" evidence="1">
    <location>
        <begin position="446"/>
        <end position="466"/>
    </location>
</feature>
<feature type="transmembrane region" description="Helical" evidence="1">
    <location>
        <begin position="475"/>
        <end position="495"/>
    </location>
</feature>